<gene>
    <name type="primary">Cyp313a3</name>
    <name type="ORF">CG10093</name>
</gene>
<feature type="chain" id="PRO_0000052325" description="Probable cytochrome P450 313a3">
    <location>
        <begin position="1"/>
        <end position="492"/>
    </location>
</feature>
<feature type="binding site" description="axial binding residue" evidence="1">
    <location>
        <position position="438"/>
    </location>
    <ligand>
        <name>heme</name>
        <dbReference type="ChEBI" id="CHEBI:30413"/>
    </ligand>
    <ligandPart>
        <name>Fe</name>
        <dbReference type="ChEBI" id="CHEBI:18248"/>
    </ligandPart>
</feature>
<keyword id="KW-0256">Endoplasmic reticulum</keyword>
<keyword id="KW-0349">Heme</keyword>
<keyword id="KW-0408">Iron</keyword>
<keyword id="KW-0472">Membrane</keyword>
<keyword id="KW-0479">Metal-binding</keyword>
<keyword id="KW-0492">Microsome</keyword>
<keyword id="KW-0503">Monooxygenase</keyword>
<keyword id="KW-0560">Oxidoreductase</keyword>
<keyword id="KW-1185">Reference proteome</keyword>
<proteinExistence type="inferred from homology"/>
<evidence type="ECO:0000250" key="1"/>
<evidence type="ECO:0000305" key="2"/>
<name>CP133_DROME</name>
<comment type="function">
    <text evidence="1">May be involved in the metabolism of insect hormones and in the breakdown of synthetic insecticides.</text>
</comment>
<comment type="cofactor">
    <cofactor evidence="1">
        <name>heme</name>
        <dbReference type="ChEBI" id="CHEBI:30413"/>
    </cofactor>
</comment>
<comment type="subcellular location">
    <subcellularLocation>
        <location evidence="2">Endoplasmic reticulum membrane</location>
        <topology evidence="2">Peripheral membrane protein</topology>
    </subcellularLocation>
    <subcellularLocation>
        <location evidence="2">Microsome membrane</location>
        <topology evidence="2">Peripheral membrane protein</topology>
    </subcellularLocation>
</comment>
<comment type="similarity">
    <text evidence="2">Belongs to the cytochrome P450 family.</text>
</comment>
<protein>
    <recommendedName>
        <fullName>Probable cytochrome P450 313a3</fullName>
        <ecNumber>1.14.-.-</ecNumber>
    </recommendedName>
    <alternativeName>
        <fullName>CYPCCCXIIIA3</fullName>
    </alternativeName>
</protein>
<reference key="1">
    <citation type="journal article" date="2000" name="Science">
        <title>The genome sequence of Drosophila melanogaster.</title>
        <authorList>
            <person name="Adams M.D."/>
            <person name="Celniker S.E."/>
            <person name="Holt R.A."/>
            <person name="Evans C.A."/>
            <person name="Gocayne J.D."/>
            <person name="Amanatides P.G."/>
            <person name="Scherer S.E."/>
            <person name="Li P.W."/>
            <person name="Hoskins R.A."/>
            <person name="Galle R.F."/>
            <person name="George R.A."/>
            <person name="Lewis S.E."/>
            <person name="Richards S."/>
            <person name="Ashburner M."/>
            <person name="Henderson S.N."/>
            <person name="Sutton G.G."/>
            <person name="Wortman J.R."/>
            <person name="Yandell M.D."/>
            <person name="Zhang Q."/>
            <person name="Chen L.X."/>
            <person name="Brandon R.C."/>
            <person name="Rogers Y.-H.C."/>
            <person name="Blazej R.G."/>
            <person name="Champe M."/>
            <person name="Pfeiffer B.D."/>
            <person name="Wan K.H."/>
            <person name="Doyle C."/>
            <person name="Baxter E.G."/>
            <person name="Helt G."/>
            <person name="Nelson C.R."/>
            <person name="Miklos G.L.G."/>
            <person name="Abril J.F."/>
            <person name="Agbayani A."/>
            <person name="An H.-J."/>
            <person name="Andrews-Pfannkoch C."/>
            <person name="Baldwin D."/>
            <person name="Ballew R.M."/>
            <person name="Basu A."/>
            <person name="Baxendale J."/>
            <person name="Bayraktaroglu L."/>
            <person name="Beasley E.M."/>
            <person name="Beeson K.Y."/>
            <person name="Benos P.V."/>
            <person name="Berman B.P."/>
            <person name="Bhandari D."/>
            <person name="Bolshakov S."/>
            <person name="Borkova D."/>
            <person name="Botchan M.R."/>
            <person name="Bouck J."/>
            <person name="Brokstein P."/>
            <person name="Brottier P."/>
            <person name="Burtis K.C."/>
            <person name="Busam D.A."/>
            <person name="Butler H."/>
            <person name="Cadieu E."/>
            <person name="Center A."/>
            <person name="Chandra I."/>
            <person name="Cherry J.M."/>
            <person name="Cawley S."/>
            <person name="Dahlke C."/>
            <person name="Davenport L.B."/>
            <person name="Davies P."/>
            <person name="de Pablos B."/>
            <person name="Delcher A."/>
            <person name="Deng Z."/>
            <person name="Mays A.D."/>
            <person name="Dew I."/>
            <person name="Dietz S.M."/>
            <person name="Dodson K."/>
            <person name="Doup L.E."/>
            <person name="Downes M."/>
            <person name="Dugan-Rocha S."/>
            <person name="Dunkov B.C."/>
            <person name="Dunn P."/>
            <person name="Durbin K.J."/>
            <person name="Evangelista C.C."/>
            <person name="Ferraz C."/>
            <person name="Ferriera S."/>
            <person name="Fleischmann W."/>
            <person name="Fosler C."/>
            <person name="Gabrielian A.E."/>
            <person name="Garg N.S."/>
            <person name="Gelbart W.M."/>
            <person name="Glasser K."/>
            <person name="Glodek A."/>
            <person name="Gong F."/>
            <person name="Gorrell J.H."/>
            <person name="Gu Z."/>
            <person name="Guan P."/>
            <person name="Harris M."/>
            <person name="Harris N.L."/>
            <person name="Harvey D.A."/>
            <person name="Heiman T.J."/>
            <person name="Hernandez J.R."/>
            <person name="Houck J."/>
            <person name="Hostin D."/>
            <person name="Houston K.A."/>
            <person name="Howland T.J."/>
            <person name="Wei M.-H."/>
            <person name="Ibegwam C."/>
            <person name="Jalali M."/>
            <person name="Kalush F."/>
            <person name="Karpen G.H."/>
            <person name="Ke Z."/>
            <person name="Kennison J.A."/>
            <person name="Ketchum K.A."/>
            <person name="Kimmel B.E."/>
            <person name="Kodira C.D."/>
            <person name="Kraft C.L."/>
            <person name="Kravitz S."/>
            <person name="Kulp D."/>
            <person name="Lai Z."/>
            <person name="Lasko P."/>
            <person name="Lei Y."/>
            <person name="Levitsky A.A."/>
            <person name="Li J.H."/>
            <person name="Li Z."/>
            <person name="Liang Y."/>
            <person name="Lin X."/>
            <person name="Liu X."/>
            <person name="Mattei B."/>
            <person name="McIntosh T.C."/>
            <person name="McLeod M.P."/>
            <person name="McPherson D."/>
            <person name="Merkulov G."/>
            <person name="Milshina N.V."/>
            <person name="Mobarry C."/>
            <person name="Morris J."/>
            <person name="Moshrefi A."/>
            <person name="Mount S.M."/>
            <person name="Moy M."/>
            <person name="Murphy B."/>
            <person name="Murphy L."/>
            <person name="Muzny D.M."/>
            <person name="Nelson D.L."/>
            <person name="Nelson D.R."/>
            <person name="Nelson K.A."/>
            <person name="Nixon K."/>
            <person name="Nusskern D.R."/>
            <person name="Pacleb J.M."/>
            <person name="Palazzolo M."/>
            <person name="Pittman G.S."/>
            <person name="Pan S."/>
            <person name="Pollard J."/>
            <person name="Puri V."/>
            <person name="Reese M.G."/>
            <person name="Reinert K."/>
            <person name="Remington K."/>
            <person name="Saunders R.D.C."/>
            <person name="Scheeler F."/>
            <person name="Shen H."/>
            <person name="Shue B.C."/>
            <person name="Siden-Kiamos I."/>
            <person name="Simpson M."/>
            <person name="Skupski M.P."/>
            <person name="Smith T.J."/>
            <person name="Spier E."/>
            <person name="Spradling A.C."/>
            <person name="Stapleton M."/>
            <person name="Strong R."/>
            <person name="Sun E."/>
            <person name="Svirskas R."/>
            <person name="Tector C."/>
            <person name="Turner R."/>
            <person name="Venter E."/>
            <person name="Wang A.H."/>
            <person name="Wang X."/>
            <person name="Wang Z.-Y."/>
            <person name="Wassarman D.A."/>
            <person name="Weinstock G.M."/>
            <person name="Weissenbach J."/>
            <person name="Williams S.M."/>
            <person name="Woodage T."/>
            <person name="Worley K.C."/>
            <person name="Wu D."/>
            <person name="Yang S."/>
            <person name="Yao Q.A."/>
            <person name="Ye J."/>
            <person name="Yeh R.-F."/>
            <person name="Zaveri J.S."/>
            <person name="Zhan M."/>
            <person name="Zhang G."/>
            <person name="Zhao Q."/>
            <person name="Zheng L."/>
            <person name="Zheng X.H."/>
            <person name="Zhong F.N."/>
            <person name="Zhong W."/>
            <person name="Zhou X."/>
            <person name="Zhu S.C."/>
            <person name="Zhu X."/>
            <person name="Smith H.O."/>
            <person name="Gibbs R.A."/>
            <person name="Myers E.W."/>
            <person name="Rubin G.M."/>
            <person name="Venter J.C."/>
        </authorList>
    </citation>
    <scope>NUCLEOTIDE SEQUENCE [LARGE SCALE GENOMIC DNA]</scope>
    <source>
        <strain>Berkeley</strain>
    </source>
</reference>
<reference key="2">
    <citation type="journal article" date="2002" name="Genome Biol.">
        <title>Annotation of the Drosophila melanogaster euchromatic genome: a systematic review.</title>
        <authorList>
            <person name="Misra S."/>
            <person name="Crosby M.A."/>
            <person name="Mungall C.J."/>
            <person name="Matthews B.B."/>
            <person name="Campbell K.S."/>
            <person name="Hradecky P."/>
            <person name="Huang Y."/>
            <person name="Kaminker J.S."/>
            <person name="Millburn G.H."/>
            <person name="Prochnik S.E."/>
            <person name="Smith C.D."/>
            <person name="Tupy J.L."/>
            <person name="Whitfield E.J."/>
            <person name="Bayraktaroglu L."/>
            <person name="Berman B.P."/>
            <person name="Bettencourt B.R."/>
            <person name="Celniker S.E."/>
            <person name="de Grey A.D.N.J."/>
            <person name="Drysdale R.A."/>
            <person name="Harris N.L."/>
            <person name="Richter J."/>
            <person name="Russo S."/>
            <person name="Schroeder A.J."/>
            <person name="Shu S.Q."/>
            <person name="Stapleton M."/>
            <person name="Yamada C."/>
            <person name="Ashburner M."/>
            <person name="Gelbart W.M."/>
            <person name="Rubin G.M."/>
            <person name="Lewis S.E."/>
        </authorList>
    </citation>
    <scope>GENOME REANNOTATION</scope>
    <source>
        <strain>Berkeley</strain>
    </source>
</reference>
<organism>
    <name type="scientific">Drosophila melanogaster</name>
    <name type="common">Fruit fly</name>
    <dbReference type="NCBI Taxonomy" id="7227"/>
    <lineage>
        <taxon>Eukaryota</taxon>
        <taxon>Metazoa</taxon>
        <taxon>Ecdysozoa</taxon>
        <taxon>Arthropoda</taxon>
        <taxon>Hexapoda</taxon>
        <taxon>Insecta</taxon>
        <taxon>Pterygota</taxon>
        <taxon>Neoptera</taxon>
        <taxon>Endopterygota</taxon>
        <taxon>Diptera</taxon>
        <taxon>Brachycera</taxon>
        <taxon>Muscomorpha</taxon>
        <taxon>Ephydroidea</taxon>
        <taxon>Drosophilidae</taxon>
        <taxon>Drosophila</taxon>
        <taxon>Sophophora</taxon>
    </lineage>
</organism>
<dbReference type="EC" id="1.14.-.-"/>
<dbReference type="EMBL" id="AE014297">
    <property type="protein sequence ID" value="AAF54770.3"/>
    <property type="molecule type" value="Genomic_DNA"/>
</dbReference>
<dbReference type="RefSeq" id="NP_650170.2">
    <property type="nucleotide sequence ID" value="NM_141913.3"/>
</dbReference>
<dbReference type="SMR" id="Q9VGB3"/>
<dbReference type="FunCoup" id="Q9VGB3">
    <property type="interactions" value="1"/>
</dbReference>
<dbReference type="IntAct" id="Q9VGB3">
    <property type="interactions" value="1"/>
</dbReference>
<dbReference type="STRING" id="7227.FBpp0082086"/>
<dbReference type="GlyGen" id="Q9VGB3">
    <property type="glycosylation" value="1 site"/>
</dbReference>
<dbReference type="PaxDb" id="7227-FBpp0082086"/>
<dbReference type="DNASU" id="41488"/>
<dbReference type="EnsemblMetazoa" id="FBtr0082617">
    <property type="protein sequence ID" value="FBpp0082086"/>
    <property type="gene ID" value="FBgn0038007"/>
</dbReference>
<dbReference type="GeneID" id="41488"/>
<dbReference type="KEGG" id="dme:Dmel_CG10093"/>
<dbReference type="UCSC" id="CG10093-RA">
    <property type="organism name" value="d. melanogaster"/>
</dbReference>
<dbReference type="AGR" id="FB:FBgn0038007"/>
<dbReference type="CTD" id="41488"/>
<dbReference type="FlyBase" id="FBgn0038007">
    <property type="gene designation" value="Cyp313a3"/>
</dbReference>
<dbReference type="VEuPathDB" id="VectorBase:FBgn0038007"/>
<dbReference type="eggNOG" id="KOG0157">
    <property type="taxonomic scope" value="Eukaryota"/>
</dbReference>
<dbReference type="GeneTree" id="ENSGT00940000167150"/>
<dbReference type="HOGENOM" id="CLU_001570_5_1_1"/>
<dbReference type="InParanoid" id="Q9VGB3"/>
<dbReference type="OMA" id="HPQASFM"/>
<dbReference type="OrthoDB" id="1470350at2759"/>
<dbReference type="PhylomeDB" id="Q9VGB3"/>
<dbReference type="BioGRID-ORCS" id="41488">
    <property type="hits" value="0 hits in 1 CRISPR screen"/>
</dbReference>
<dbReference type="GenomeRNAi" id="41488"/>
<dbReference type="PRO" id="PR:Q9VGB3"/>
<dbReference type="Proteomes" id="UP000000803">
    <property type="component" value="Chromosome 3R"/>
</dbReference>
<dbReference type="Bgee" id="FBgn0038007">
    <property type="expression patterns" value="Expressed in spermathecum and 3 other cell types or tissues"/>
</dbReference>
<dbReference type="ExpressionAtlas" id="Q9VGB3">
    <property type="expression patterns" value="baseline and differential"/>
</dbReference>
<dbReference type="GO" id="GO:0005789">
    <property type="term" value="C:endoplasmic reticulum membrane"/>
    <property type="evidence" value="ECO:0007669"/>
    <property type="project" value="UniProtKB-SubCell"/>
</dbReference>
<dbReference type="GO" id="GO:0020037">
    <property type="term" value="F:heme binding"/>
    <property type="evidence" value="ECO:0007669"/>
    <property type="project" value="InterPro"/>
</dbReference>
<dbReference type="GO" id="GO:0005506">
    <property type="term" value="F:iron ion binding"/>
    <property type="evidence" value="ECO:0007669"/>
    <property type="project" value="InterPro"/>
</dbReference>
<dbReference type="GO" id="GO:0004497">
    <property type="term" value="F:monooxygenase activity"/>
    <property type="evidence" value="ECO:0007669"/>
    <property type="project" value="UniProtKB-KW"/>
</dbReference>
<dbReference type="GO" id="GO:0016705">
    <property type="term" value="F:oxidoreductase activity, acting on paired donors, with incorporation or reduction of molecular oxygen"/>
    <property type="evidence" value="ECO:0007669"/>
    <property type="project" value="InterPro"/>
</dbReference>
<dbReference type="CDD" id="cd11057">
    <property type="entry name" value="CYP313-like"/>
    <property type="match status" value="1"/>
</dbReference>
<dbReference type="Gene3D" id="1.10.630.10">
    <property type="entry name" value="Cytochrome P450"/>
    <property type="match status" value="1"/>
</dbReference>
<dbReference type="InterPro" id="IPR001128">
    <property type="entry name" value="Cyt_P450"/>
</dbReference>
<dbReference type="InterPro" id="IPR017972">
    <property type="entry name" value="Cyt_P450_CS"/>
</dbReference>
<dbReference type="InterPro" id="IPR002401">
    <property type="entry name" value="Cyt_P450_E_grp-I"/>
</dbReference>
<dbReference type="InterPro" id="IPR036396">
    <property type="entry name" value="Cyt_P450_sf"/>
</dbReference>
<dbReference type="InterPro" id="IPR050196">
    <property type="entry name" value="Cytochrome_P450_Monoox"/>
</dbReference>
<dbReference type="PANTHER" id="PTHR24291:SF189">
    <property type="entry name" value="CYTOCHROME P450 4C3-RELATED"/>
    <property type="match status" value="1"/>
</dbReference>
<dbReference type="PANTHER" id="PTHR24291">
    <property type="entry name" value="CYTOCHROME P450 FAMILY 4"/>
    <property type="match status" value="1"/>
</dbReference>
<dbReference type="Pfam" id="PF00067">
    <property type="entry name" value="p450"/>
    <property type="match status" value="1"/>
</dbReference>
<dbReference type="PRINTS" id="PR00463">
    <property type="entry name" value="EP450I"/>
</dbReference>
<dbReference type="PRINTS" id="PR00385">
    <property type="entry name" value="P450"/>
</dbReference>
<dbReference type="SUPFAM" id="SSF48264">
    <property type="entry name" value="Cytochrome P450"/>
    <property type="match status" value="1"/>
</dbReference>
<dbReference type="PROSITE" id="PS00086">
    <property type="entry name" value="CYTOCHROME_P450"/>
    <property type="match status" value="1"/>
</dbReference>
<sequence length="492" mass="56195">MDTFQLLLAVGVCFWIYFLWSRRRLYMMHFKIPGPMGLPILGIAFEYLITYKRKMSIRTKYMDIYGSTCLVWVGPTPFVITRDPKIAEEIFLSPECLNRSSIFSKPVNSCTGDGLLSLEASKWVDRRKNLNPAFKQNVLLSFLPIFNSEAKTLVAFLDSLVGQGEKKVRDDIVRWSFRIATQTTVGTDVKKDASFKNDSVLKSYETFMKIIVMNVLLPFTHNKIFSTLGGFETQKALAKSNVNKMIGTIVDKKLMTKPESGSQPEITSVINKAIELHRNGEMSREEVQSECCSFVVAAFETTGDTVYHALILLAMFPEHQDTVYQELKELFPVAGDFEVTYDDLQRMVFLERVVNETLRLIPSVPFTPRETIRDFRLSSGVVIPKGVGIGIDIFATHRNRDHWGTDPSSFNPDHFLPDNVRDRHPYAYIPFSKGRRNCIGWKYGLMSSKLALSKILRNCKVSTSFRYEDLEFVDNIGMELAQSPGLEFHRRT</sequence>
<accession>Q9VGB3</accession>